<keyword id="KW-0002">3D-structure</keyword>
<keyword id="KW-1064">Adaptive immunity</keyword>
<keyword id="KW-1015">Disulfide bond</keyword>
<keyword id="KW-0967">Endosome</keyword>
<keyword id="KW-0325">Glycoprotein</keyword>
<keyword id="KW-0391">Immunity</keyword>
<keyword id="KW-0458">Lysosome</keyword>
<keyword id="KW-0472">Membrane</keyword>
<keyword id="KW-0491">MHC II</keyword>
<keyword id="KW-1185">Reference proteome</keyword>
<keyword id="KW-0732">Signal</keyword>
<keyword id="KW-0812">Transmembrane</keyword>
<keyword id="KW-1133">Transmembrane helix</keyword>
<accession>P28078</accession>
<organism>
    <name type="scientific">Mus musculus</name>
    <name type="common">Mouse</name>
    <dbReference type="NCBI Taxonomy" id="10090"/>
    <lineage>
        <taxon>Eukaryota</taxon>
        <taxon>Metazoa</taxon>
        <taxon>Chordata</taxon>
        <taxon>Craniata</taxon>
        <taxon>Vertebrata</taxon>
        <taxon>Euteleostomi</taxon>
        <taxon>Mammalia</taxon>
        <taxon>Eutheria</taxon>
        <taxon>Euarchontoglires</taxon>
        <taxon>Glires</taxon>
        <taxon>Rodentia</taxon>
        <taxon>Myomorpha</taxon>
        <taxon>Muroidea</taxon>
        <taxon>Muridae</taxon>
        <taxon>Murinae</taxon>
        <taxon>Mus</taxon>
        <taxon>Mus</taxon>
    </lineage>
</organism>
<gene>
    <name type="primary">H2-DMa</name>
    <name type="synonym">H2-Ma</name>
    <name type="synonym">Ma</name>
</gene>
<comment type="function">
    <text evidence="1">Plays a critical role in catalyzing the release of class II-associated invariant chain peptide (CLIP) from newly synthesized MHC class II molecules and freeing the peptide binding site for acquisition of antigenic peptides.</text>
</comment>
<comment type="subunit">
    <text evidence="1 4">Heterodimer of an alpha chain (DMA) and a beta chain (DMB) (PubMed:9768758). Interacts with MHCII; this interaction mediates rapid selection of high-affinity peptides (By similarity).</text>
</comment>
<comment type="subcellular location">
    <subcellularLocation>
        <location>Late endosome membrane</location>
        <topology>Single-pass type I membrane protein</topology>
    </subcellularLocation>
    <subcellularLocation>
        <location>Lysosome membrane</location>
        <topology>Single-pass type I membrane protein</topology>
    </subcellularLocation>
    <text>Localizes to late endocytic compartment. Associates with lysosome membranes.</text>
</comment>
<comment type="similarity">
    <text evidence="5">Belongs to the MHC class II family.</text>
</comment>
<feature type="signal peptide" evidence="2">
    <location>
        <begin position="1"/>
        <end position="26"/>
    </location>
</feature>
<feature type="chain" id="PRO_0000018959" description="Class II histocompatibility antigen, M alpha chain">
    <location>
        <begin position="27"/>
        <end position="261"/>
    </location>
</feature>
<feature type="topological domain" description="Lumenal" evidence="2">
    <location>
        <begin position="27"/>
        <end position="231"/>
    </location>
</feature>
<feature type="transmembrane region" description="Helical" evidence="2">
    <location>
        <begin position="232"/>
        <end position="252"/>
    </location>
</feature>
<feature type="topological domain" description="Cytoplasmic" evidence="2">
    <location>
        <begin position="253"/>
        <end position="261"/>
    </location>
</feature>
<feature type="domain" description="Ig-like C1-type">
    <location>
        <begin position="114"/>
        <end position="215"/>
    </location>
</feature>
<feature type="region of interest" description="Alpha-1">
    <location>
        <begin position="27"/>
        <end position="124"/>
    </location>
</feature>
<feature type="region of interest" description="Alpha-2">
    <location>
        <begin position="125"/>
        <end position="217"/>
    </location>
</feature>
<feature type="region of interest" description="Connecting peptide" evidence="2">
    <location>
        <begin position="218"/>
        <end position="231"/>
    </location>
</feature>
<feature type="glycosylation site" description="N-linked (GlcNAc...) asparagine" evidence="4">
    <location>
        <position position="41"/>
    </location>
</feature>
<feature type="disulfide bond" evidence="3 4">
    <location>
        <begin position="50"/>
        <end position="105"/>
    </location>
</feature>
<feature type="disulfide bond" evidence="3 4">
    <location>
        <begin position="147"/>
        <end position="202"/>
    </location>
</feature>
<feature type="strand" evidence="6">
    <location>
        <begin position="41"/>
        <end position="63"/>
    </location>
</feature>
<feature type="strand" evidence="6">
    <location>
        <begin position="66"/>
        <end position="72"/>
    </location>
</feature>
<feature type="turn" evidence="6">
    <location>
        <begin position="73"/>
        <end position="76"/>
    </location>
</feature>
<feature type="strand" evidence="6">
    <location>
        <begin position="77"/>
        <end position="82"/>
    </location>
</feature>
<feature type="turn" evidence="6">
    <location>
        <begin position="83"/>
        <end position="86"/>
    </location>
</feature>
<feature type="helix" evidence="6">
    <location>
        <begin position="87"/>
        <end position="90"/>
    </location>
</feature>
<feature type="helix" evidence="6">
    <location>
        <begin position="95"/>
        <end position="110"/>
    </location>
</feature>
<feature type="helix" evidence="6">
    <location>
        <begin position="112"/>
        <end position="116"/>
    </location>
</feature>
<feature type="strand" evidence="6">
    <location>
        <begin position="128"/>
        <end position="135"/>
    </location>
</feature>
<feature type="strand" evidence="6">
    <location>
        <begin position="143"/>
        <end position="155"/>
    </location>
</feature>
<feature type="strand" evidence="6">
    <location>
        <begin position="157"/>
        <end position="163"/>
    </location>
</feature>
<feature type="strand" evidence="6">
    <location>
        <begin position="166"/>
        <end position="168"/>
    </location>
</feature>
<feature type="strand" evidence="6">
    <location>
        <begin position="175"/>
        <end position="179"/>
    </location>
</feature>
<feature type="turn" evidence="6">
    <location>
        <begin position="180"/>
        <end position="182"/>
    </location>
</feature>
<feature type="strand" evidence="6">
    <location>
        <begin position="183"/>
        <end position="192"/>
    </location>
</feature>
<feature type="strand" evidence="6">
    <location>
        <begin position="200"/>
        <end position="206"/>
    </location>
</feature>
<feature type="turn" evidence="6">
    <location>
        <begin position="207"/>
        <end position="209"/>
    </location>
</feature>
<feature type="strand" evidence="6">
    <location>
        <begin position="212"/>
        <end position="217"/>
    </location>
</feature>
<proteinExistence type="evidence at protein level"/>
<name>DMA_MOUSE</name>
<reference key="1">
    <citation type="journal article" date="1991" name="Nature">
        <title>New class II-like genes in the murine MHC.</title>
        <authorList>
            <person name="Cho S."/>
            <person name="Attaya M."/>
            <person name="Monaco J.J."/>
        </authorList>
    </citation>
    <scope>NUCLEOTIDE SEQUENCE [MRNA]</scope>
    <source>
        <strain>BALB/cJ</strain>
    </source>
</reference>
<reference key="2">
    <citation type="journal article" date="2010" name="Cell">
        <title>A tissue-specific atlas of mouse protein phosphorylation and expression.</title>
        <authorList>
            <person name="Huttlin E.L."/>
            <person name="Jedrychowski M.P."/>
            <person name="Elias J.E."/>
            <person name="Goswami T."/>
            <person name="Rad R."/>
            <person name="Beausoleil S.A."/>
            <person name="Villen J."/>
            <person name="Haas W."/>
            <person name="Sowa M.E."/>
            <person name="Gygi S.P."/>
        </authorList>
    </citation>
    <scope>IDENTIFICATION BY MASS SPECTROMETRY [LARGE SCALE ANALYSIS]</scope>
    <source>
        <tissue>Spleen</tissue>
    </source>
</reference>
<reference key="3">
    <citation type="journal article" date="1998" name="Immunity">
        <title>Crystal structure of mouse H2-M.</title>
        <authorList>
            <person name="Fremont D.H."/>
            <person name="Crawford F."/>
            <person name="Marrack P."/>
            <person name="Hendrickson W.A."/>
            <person name="Kappler J."/>
        </authorList>
    </citation>
    <scope>X-RAY CRYSTALLOGRAPHY (3.1 ANGSTROMS) OF 30-220</scope>
    <scope>SUBUNIT</scope>
    <scope>GLYCOSYLATION AT ASN-41</scope>
    <scope>DISULFIDE BONDS</scope>
</reference>
<evidence type="ECO:0000250" key="1">
    <source>
        <dbReference type="UniProtKB" id="P28067"/>
    </source>
</evidence>
<evidence type="ECO:0000255" key="2"/>
<evidence type="ECO:0000255" key="3">
    <source>
        <dbReference type="PROSITE-ProRule" id="PRU00114"/>
    </source>
</evidence>
<evidence type="ECO:0000269" key="4">
    <source>
    </source>
</evidence>
<evidence type="ECO:0000305" key="5"/>
<evidence type="ECO:0007829" key="6">
    <source>
        <dbReference type="PDB" id="1K8I"/>
    </source>
</evidence>
<dbReference type="EMBL" id="X62742">
    <property type="protein sequence ID" value="CAA44604.1"/>
    <property type="molecule type" value="mRNA"/>
</dbReference>
<dbReference type="CCDS" id="CCDS37579.1"/>
<dbReference type="PIR" id="S17888">
    <property type="entry name" value="S17888"/>
</dbReference>
<dbReference type="PDB" id="1K8I">
    <property type="method" value="X-ray"/>
    <property type="resolution" value="3.10 A"/>
    <property type="chains" value="A=30-220"/>
</dbReference>
<dbReference type="PDBsum" id="1K8I"/>
<dbReference type="SMR" id="P28078"/>
<dbReference type="FunCoup" id="P28078">
    <property type="interactions" value="131"/>
</dbReference>
<dbReference type="IntAct" id="P28078">
    <property type="interactions" value="1"/>
</dbReference>
<dbReference type="STRING" id="10090.ENSMUSP00000037088"/>
<dbReference type="GlyCosmos" id="P28078">
    <property type="glycosylation" value="1 site, No reported glycans"/>
</dbReference>
<dbReference type="GlyGen" id="P28078">
    <property type="glycosylation" value="2 sites"/>
</dbReference>
<dbReference type="iPTMnet" id="P28078"/>
<dbReference type="PhosphoSitePlus" id="P28078"/>
<dbReference type="PaxDb" id="10090-ENSMUSP00000037088"/>
<dbReference type="ProteomicsDB" id="277339"/>
<dbReference type="AGR" id="MGI:95921"/>
<dbReference type="MGI" id="MGI:95921">
    <property type="gene designation" value="H2-DMa"/>
</dbReference>
<dbReference type="eggNOG" id="ENOG502S6RX">
    <property type="taxonomic scope" value="Eukaryota"/>
</dbReference>
<dbReference type="InParanoid" id="P28078"/>
<dbReference type="OrthoDB" id="8935021at2759"/>
<dbReference type="PhylomeDB" id="P28078"/>
<dbReference type="Reactome" id="R-MMU-2132295">
    <property type="pathway name" value="MHC class II antigen presentation"/>
</dbReference>
<dbReference type="ChiTaRS" id="H2-DMa">
    <property type="organism name" value="mouse"/>
</dbReference>
<dbReference type="EvolutionaryTrace" id="P28078"/>
<dbReference type="PRO" id="PR:P28078"/>
<dbReference type="Proteomes" id="UP000000589">
    <property type="component" value="Unplaced"/>
</dbReference>
<dbReference type="RNAct" id="P28078">
    <property type="molecule type" value="protein"/>
</dbReference>
<dbReference type="GO" id="GO:0010008">
    <property type="term" value="C:endosome membrane"/>
    <property type="evidence" value="ECO:0000314"/>
    <property type="project" value="MGI"/>
</dbReference>
<dbReference type="GO" id="GO:0005770">
    <property type="term" value="C:late endosome"/>
    <property type="evidence" value="ECO:0000314"/>
    <property type="project" value="MGI"/>
</dbReference>
<dbReference type="GO" id="GO:0031902">
    <property type="term" value="C:late endosome membrane"/>
    <property type="evidence" value="ECO:0000250"/>
    <property type="project" value="UniProtKB"/>
</dbReference>
<dbReference type="GO" id="GO:0005765">
    <property type="term" value="C:lysosomal membrane"/>
    <property type="evidence" value="ECO:0000314"/>
    <property type="project" value="MGI"/>
</dbReference>
<dbReference type="GO" id="GO:0005764">
    <property type="term" value="C:lysosome"/>
    <property type="evidence" value="ECO:0000314"/>
    <property type="project" value="MGI"/>
</dbReference>
<dbReference type="GO" id="GO:0042613">
    <property type="term" value="C:MHC class II protein complex"/>
    <property type="evidence" value="ECO:0007669"/>
    <property type="project" value="UniProtKB-KW"/>
</dbReference>
<dbReference type="GO" id="GO:0005771">
    <property type="term" value="C:multivesicular body"/>
    <property type="evidence" value="ECO:0000314"/>
    <property type="project" value="MGI"/>
</dbReference>
<dbReference type="GO" id="GO:0023026">
    <property type="term" value="F:MHC class II protein complex binding"/>
    <property type="evidence" value="ECO:0000250"/>
    <property type="project" value="UniProtKB"/>
</dbReference>
<dbReference type="GO" id="GO:0019882">
    <property type="term" value="P:antigen processing and presentation"/>
    <property type="evidence" value="ECO:0000314"/>
    <property type="project" value="MGI"/>
</dbReference>
<dbReference type="GO" id="GO:0019886">
    <property type="term" value="P:antigen processing and presentation of exogenous peptide antigen via MHC class II"/>
    <property type="evidence" value="ECO:0000314"/>
    <property type="project" value="MGI"/>
</dbReference>
<dbReference type="GO" id="GO:0051085">
    <property type="term" value="P:chaperone cofactor-dependent protein refolding"/>
    <property type="evidence" value="ECO:0000314"/>
    <property type="project" value="MGI"/>
</dbReference>
<dbReference type="GO" id="GO:0016064">
    <property type="term" value="P:immunoglobulin mediated immune response"/>
    <property type="evidence" value="ECO:0000315"/>
    <property type="project" value="MGI"/>
</dbReference>
<dbReference type="GO" id="GO:0048839">
    <property type="term" value="P:inner ear development"/>
    <property type="evidence" value="ECO:0000314"/>
    <property type="project" value="MGI"/>
</dbReference>
<dbReference type="GO" id="GO:0002503">
    <property type="term" value="P:peptide antigen assembly with MHC class II protein complex"/>
    <property type="evidence" value="ECO:0000250"/>
    <property type="project" value="UniProtKB"/>
</dbReference>
<dbReference type="GO" id="GO:0002636">
    <property type="term" value="P:positive regulation of germinal center formation"/>
    <property type="evidence" value="ECO:0000315"/>
    <property type="project" value="BHF-UCL"/>
</dbReference>
<dbReference type="GO" id="GO:0002922">
    <property type="term" value="P:positive regulation of humoral immune response"/>
    <property type="evidence" value="ECO:0000315"/>
    <property type="project" value="BHF-UCL"/>
</dbReference>
<dbReference type="GO" id="GO:0050778">
    <property type="term" value="P:positive regulation of immune response"/>
    <property type="evidence" value="ECO:0000315"/>
    <property type="project" value="MGI"/>
</dbReference>
<dbReference type="GO" id="GO:0045582">
    <property type="term" value="P:positive regulation of T cell differentiation"/>
    <property type="evidence" value="ECO:0000315"/>
    <property type="project" value="MGI"/>
</dbReference>
<dbReference type="GO" id="GO:0045059">
    <property type="term" value="P:positive thymic T cell selection"/>
    <property type="evidence" value="ECO:0000315"/>
    <property type="project" value="MGI"/>
</dbReference>
<dbReference type="GO" id="GO:0015031">
    <property type="term" value="P:protein transport"/>
    <property type="evidence" value="ECO:0000314"/>
    <property type="project" value="MGI"/>
</dbReference>
<dbReference type="GO" id="GO:0065003">
    <property type="term" value="P:protein-containing complex assembly"/>
    <property type="evidence" value="ECO:0000314"/>
    <property type="project" value="MGI"/>
</dbReference>
<dbReference type="CDD" id="cd21009">
    <property type="entry name" value="IgC1_MHC_II_alpha_HLA-DM"/>
    <property type="match status" value="1"/>
</dbReference>
<dbReference type="Gene3D" id="3.10.320.10">
    <property type="entry name" value="Class II Histocompatibility Antigen, M Beta Chain, Chain B, domain 1"/>
    <property type="match status" value="1"/>
</dbReference>
<dbReference type="Gene3D" id="2.60.40.10">
    <property type="entry name" value="Immunoglobulins"/>
    <property type="match status" value="1"/>
</dbReference>
<dbReference type="InterPro" id="IPR007110">
    <property type="entry name" value="Ig-like_dom"/>
</dbReference>
<dbReference type="InterPro" id="IPR036179">
    <property type="entry name" value="Ig-like_dom_sf"/>
</dbReference>
<dbReference type="InterPro" id="IPR013783">
    <property type="entry name" value="Ig-like_fold"/>
</dbReference>
<dbReference type="InterPro" id="IPR003006">
    <property type="entry name" value="Ig/MHC_CS"/>
</dbReference>
<dbReference type="InterPro" id="IPR003597">
    <property type="entry name" value="Ig_C1-set"/>
</dbReference>
<dbReference type="InterPro" id="IPR050160">
    <property type="entry name" value="MHC/Immunoglobulin"/>
</dbReference>
<dbReference type="InterPro" id="IPR011162">
    <property type="entry name" value="MHC_I/II-like_Ag-recog"/>
</dbReference>
<dbReference type="InterPro" id="IPR014745">
    <property type="entry name" value="MHC_II_a/b_N"/>
</dbReference>
<dbReference type="InterPro" id="IPR001003">
    <property type="entry name" value="MHC_II_a_N"/>
</dbReference>
<dbReference type="PANTHER" id="PTHR19944:SF50">
    <property type="entry name" value="HLA CLASS II HISTOCOMPATIBILITY ANTIGEN, DM ALPHA CHAIN"/>
    <property type="match status" value="1"/>
</dbReference>
<dbReference type="PANTHER" id="PTHR19944">
    <property type="entry name" value="MHC CLASS II-RELATED"/>
    <property type="match status" value="1"/>
</dbReference>
<dbReference type="Pfam" id="PF07654">
    <property type="entry name" value="C1-set"/>
    <property type="match status" value="1"/>
</dbReference>
<dbReference type="Pfam" id="PF00993">
    <property type="entry name" value="MHC_II_alpha"/>
    <property type="match status" value="1"/>
</dbReference>
<dbReference type="SMART" id="SM00407">
    <property type="entry name" value="IGc1"/>
    <property type="match status" value="1"/>
</dbReference>
<dbReference type="SMART" id="SM00920">
    <property type="entry name" value="MHC_II_alpha"/>
    <property type="match status" value="1"/>
</dbReference>
<dbReference type="SUPFAM" id="SSF48726">
    <property type="entry name" value="Immunoglobulin"/>
    <property type="match status" value="1"/>
</dbReference>
<dbReference type="SUPFAM" id="SSF54452">
    <property type="entry name" value="MHC antigen-recognition domain"/>
    <property type="match status" value="1"/>
</dbReference>
<dbReference type="PROSITE" id="PS50835">
    <property type="entry name" value="IG_LIKE"/>
    <property type="match status" value="1"/>
</dbReference>
<dbReference type="PROSITE" id="PS00290">
    <property type="entry name" value="IG_MHC"/>
    <property type="match status" value="1"/>
</dbReference>
<sequence length="261" mass="28950">MEHEQKSGAVLLRLLRLLWLLPHSWAVLEASTPVLWDDPQNHTFRHTLFCQDGIPNIGLSETYDEDELFSFDFSQNTRVPRLPDFAEWAQGQGDASAIAFGKSFCEMLMREVSPKLEGQIPVSRGLSVAEVFTLKPLEFGKPNTLVCFISNLFPPTLTVNWQLHSAPVEGASPTSISAVDGLTFQAFSYLNFTPEPFDLYSCTVTHEIDRYTAIAYWVPQNALPSDLLENALCGVAFALGVLGTIIGIVFFLCSQRPCSGD</sequence>
<protein>
    <recommendedName>
        <fullName>Class II histocompatibility antigen, M alpha chain</fullName>
    </recommendedName>
</protein>